<name>SUFS_BACSU</name>
<evidence type="ECO:0000250" key="1"/>
<evidence type="ECO:0000269" key="2">
    <source>
    </source>
</evidence>
<evidence type="ECO:0000269" key="3">
    <source>
    </source>
</evidence>
<evidence type="ECO:0000269" key="4">
    <source>
    </source>
</evidence>
<evidence type="ECO:0000269" key="5">
    <source>
    </source>
</evidence>
<evidence type="ECO:0000269" key="6">
    <source>
    </source>
</evidence>
<evidence type="ECO:0000269" key="7">
    <source>
    </source>
</evidence>
<evidence type="ECO:0000269" key="8">
    <source>
    </source>
</evidence>
<evidence type="ECO:0000269" key="9">
    <source>
    </source>
</evidence>
<evidence type="ECO:0000305" key="10"/>
<evidence type="ECO:0007744" key="11">
    <source>
        <dbReference type="PDB" id="5J8Q"/>
    </source>
</evidence>
<evidence type="ECO:0007744" key="12">
    <source>
        <dbReference type="PDB" id="5XT5"/>
    </source>
</evidence>
<evidence type="ECO:0007744" key="13">
    <source>
        <dbReference type="PDB" id="5XT6"/>
    </source>
</evidence>
<evidence type="ECO:0007744" key="14">
    <source>
        <dbReference type="PDB" id="5ZS9"/>
    </source>
</evidence>
<evidence type="ECO:0007744" key="15">
    <source>
        <dbReference type="PDB" id="5ZSK"/>
    </source>
</evidence>
<evidence type="ECO:0007744" key="16">
    <source>
        <dbReference type="PDB" id="5ZSO"/>
    </source>
</evidence>
<evidence type="ECO:0007744" key="17">
    <source>
        <dbReference type="PDB" id="6KFZ"/>
    </source>
</evidence>
<evidence type="ECO:0007829" key="18">
    <source>
        <dbReference type="PDB" id="5J8Q"/>
    </source>
</evidence>
<evidence type="ECO:0007829" key="19">
    <source>
        <dbReference type="PDB" id="7XEL"/>
    </source>
</evidence>
<accession>O32164</accession>
<proteinExistence type="evidence at protein level"/>
<gene>
    <name type="primary">sufS</name>
    <name type="synonym">csd</name>
    <name type="synonym">yurW</name>
    <name type="ordered locus">BSU32690</name>
</gene>
<feature type="chain" id="PRO_0000150293" description="Cysteine desulfurase SufS">
    <location>
        <begin position="1"/>
        <end position="406"/>
    </location>
</feature>
<feature type="active site" description="Cysteine persulfide intermediate" evidence="7 9">
    <location>
        <position position="361"/>
    </location>
</feature>
<feature type="modified residue" description="N6-(pyridoxal phosphate)lysine" evidence="9 11">
    <location>
        <position position="224"/>
    </location>
</feature>
<feature type="mutagenesis site" description="Loss of cysteine desulfurase activity, still binds SufU and Cys." evidence="3">
    <original>C</original>
    <variation>A</variation>
    <location>
        <position position="361"/>
    </location>
</feature>
<feature type="helix" evidence="18">
    <location>
        <begin position="3"/>
        <end position="7"/>
    </location>
</feature>
<feature type="helix" evidence="18">
    <location>
        <begin position="11"/>
        <end position="13"/>
    </location>
</feature>
<feature type="strand" evidence="19">
    <location>
        <begin position="14"/>
        <end position="17"/>
    </location>
</feature>
<feature type="turn" evidence="18">
    <location>
        <begin position="27"/>
        <end position="29"/>
    </location>
</feature>
<feature type="helix" evidence="18">
    <location>
        <begin position="35"/>
        <end position="47"/>
    </location>
</feature>
<feature type="strand" evidence="18">
    <location>
        <begin position="54"/>
        <end position="56"/>
    </location>
</feature>
<feature type="helix" evidence="18">
    <location>
        <begin position="58"/>
        <end position="78"/>
    </location>
</feature>
<feature type="helix" evidence="18">
    <location>
        <begin position="83"/>
        <end position="85"/>
    </location>
</feature>
<feature type="strand" evidence="18">
    <location>
        <begin position="86"/>
        <end position="90"/>
    </location>
</feature>
<feature type="helix" evidence="18">
    <location>
        <begin position="92"/>
        <end position="102"/>
    </location>
</feature>
<feature type="helix" evidence="18">
    <location>
        <begin position="104"/>
        <end position="107"/>
    </location>
</feature>
<feature type="strand" evidence="18">
    <location>
        <begin position="113"/>
        <end position="117"/>
    </location>
</feature>
<feature type="helix" evidence="18">
    <location>
        <begin position="122"/>
        <end position="124"/>
    </location>
</feature>
<feature type="helix" evidence="18">
    <location>
        <begin position="126"/>
        <end position="135"/>
    </location>
</feature>
<feature type="strand" evidence="18">
    <location>
        <begin position="138"/>
        <end position="142"/>
    </location>
</feature>
<feature type="helix" evidence="18">
    <location>
        <begin position="152"/>
        <end position="158"/>
    </location>
</feature>
<feature type="strand" evidence="18">
    <location>
        <begin position="163"/>
        <end position="171"/>
    </location>
</feature>
<feature type="turn" evidence="18">
    <location>
        <begin position="173"/>
        <end position="175"/>
    </location>
</feature>
<feature type="helix" evidence="18">
    <location>
        <begin position="181"/>
        <end position="190"/>
    </location>
</feature>
<feature type="strand" evidence="18">
    <location>
        <begin position="194"/>
        <end position="198"/>
    </location>
</feature>
<feature type="turn" evidence="18">
    <location>
        <begin position="200"/>
        <end position="205"/>
    </location>
</feature>
<feature type="helix" evidence="18">
    <location>
        <begin position="210"/>
        <end position="213"/>
    </location>
</feature>
<feature type="strand" evidence="18">
    <location>
        <begin position="216"/>
        <end position="221"/>
    </location>
</feature>
<feature type="helix" evidence="18">
    <location>
        <begin position="222"/>
        <end position="224"/>
    </location>
</feature>
<feature type="strand" evidence="18">
    <location>
        <begin position="232"/>
        <end position="236"/>
    </location>
</feature>
<feature type="helix" evidence="18">
    <location>
        <begin position="238"/>
        <end position="243"/>
    </location>
</feature>
<feature type="strand" evidence="18">
    <location>
        <begin position="253"/>
        <end position="257"/>
    </location>
</feature>
<feature type="strand" evidence="18">
    <location>
        <begin position="262"/>
        <end position="264"/>
    </location>
</feature>
<feature type="helix" evidence="18">
    <location>
        <begin position="269"/>
        <end position="271"/>
    </location>
</feature>
<feature type="helix" evidence="18">
    <location>
        <begin position="278"/>
        <end position="294"/>
    </location>
</feature>
<feature type="helix" evidence="18">
    <location>
        <begin position="296"/>
        <end position="315"/>
    </location>
</feature>
<feature type="strand" evidence="18">
    <location>
        <begin position="320"/>
        <end position="322"/>
    </location>
</feature>
<feature type="strand" evidence="18">
    <location>
        <begin position="330"/>
        <end position="336"/>
    </location>
</feature>
<feature type="helix" evidence="18">
    <location>
        <begin position="341"/>
        <end position="350"/>
    </location>
</feature>
<feature type="strand" evidence="18">
    <location>
        <begin position="356"/>
        <end position="358"/>
    </location>
</feature>
<feature type="helix" evidence="18">
    <location>
        <begin position="363"/>
        <end position="369"/>
    </location>
</feature>
<feature type="strand" evidence="18">
    <location>
        <begin position="374"/>
        <end position="378"/>
    </location>
</feature>
<feature type="helix" evidence="18">
    <location>
        <begin position="385"/>
        <end position="406"/>
    </location>
</feature>
<protein>
    <recommendedName>
        <fullName>Cysteine desulfurase SufS</fullName>
        <ecNumber evidence="7">2.8.1.7</ecNumber>
    </recommendedName>
</protein>
<comment type="function">
    <text evidence="2 3 5 7 8 9">Type II cysteine desulfurase that acts as the initial step in the SUF-like Fe-S cluster assembly pathway. Catalyzes the removal of elemental sulfur atoms from L-cysteine by using the cofactor pyridoxal 5'-phosphate (PLP), resulting in the production of L-alanine and persulfide (PubMed:31587510). Activity is stimulated by SufU, which acts as a sulfurtransferase that receives sulfur from SufS via a zinc-ligand swapping mechanism and transfers it to SufB (PubMed:27382962, PubMed:29235855).</text>
</comment>
<comment type="catalytic activity">
    <reaction evidence="3 7">
        <text>(sulfur carrier)-H + L-cysteine = (sulfur carrier)-SH + L-alanine</text>
        <dbReference type="Rhea" id="RHEA:43892"/>
        <dbReference type="Rhea" id="RHEA-COMP:14737"/>
        <dbReference type="Rhea" id="RHEA-COMP:14739"/>
        <dbReference type="ChEBI" id="CHEBI:29917"/>
        <dbReference type="ChEBI" id="CHEBI:35235"/>
        <dbReference type="ChEBI" id="CHEBI:57972"/>
        <dbReference type="ChEBI" id="CHEBI:64428"/>
        <dbReference type="EC" id="2.8.1.7"/>
    </reaction>
</comment>
<comment type="cofactor">
    <cofactor evidence="1">
        <name>pyridoxal 5'-phosphate</name>
        <dbReference type="ChEBI" id="CHEBI:597326"/>
    </cofactor>
</comment>
<comment type="activity regulation">
    <text evidence="4 6">A Cys to Ala mutation in SufU (Cys-41-Ala) has been described to be a competivie inhibitor of SufS activity and a non-competitive inhibitor (PubMed:21236255, PubMed:24321018).</text>
</comment>
<comment type="biophysicochemical properties">
    <kinetics>
        <KM evidence="3 4">86 uM for L-cysteine</KM>
        <KM evidence="3 4">30 uM for SufU</KM>
        <Vmax evidence="3 4">1157.0 nmol/min/mg enzyme in the presence of SufU</Vmax>
        <text>In the presence of dithiothreitol, which regenerates the second reaction product SufU.S.</text>
    </kinetics>
</comment>
<comment type="subunit">
    <text evidence="3 4 7">Homodimer (PubMed:27382962). Interacts with SufU; this interaction induces an opening of the active site pocket of SufS (PubMed:27382962). Interacts with frataxin/Fra (PubMed:27382962).</text>
</comment>
<comment type="interaction">
    <interactant intactId="EBI-7826704">
        <id>O32164</id>
    </interactant>
    <interactant intactId="EBI-8561343">
        <id>O32163</id>
        <label>sufU</label>
    </interactant>
    <organismsDiffer>false</organismsDiffer>
    <experiments>8</experiments>
</comment>
<comment type="similarity">
    <text evidence="10">Belongs to the class-V pyridoxal-phosphate-dependent aminotransferase family. Csd subfamily.</text>
</comment>
<keyword id="KW-0002">3D-structure</keyword>
<keyword id="KW-0663">Pyridoxal phosphate</keyword>
<keyword id="KW-1185">Reference proteome</keyword>
<keyword id="KW-0808">Transferase</keyword>
<organism>
    <name type="scientific">Bacillus subtilis (strain 168)</name>
    <dbReference type="NCBI Taxonomy" id="224308"/>
    <lineage>
        <taxon>Bacteria</taxon>
        <taxon>Bacillati</taxon>
        <taxon>Bacillota</taxon>
        <taxon>Bacilli</taxon>
        <taxon>Bacillales</taxon>
        <taxon>Bacillaceae</taxon>
        <taxon>Bacillus</taxon>
    </lineage>
</organism>
<sequence>MNITDIREQFPILHQQVNGHDLVYLDSAATSQKPRAVIETLDKYYNQYNSNVHRGVHTLGTRATDGYEGAREKVRKFINAKSMAEIIFTKGTTTSLNMVALSYARANLKPGDEVVITYMEHHANIIPWQQAVKATGATLKYIPLQEDGTISLEDVRETVTSNTKIVAVSHVSNVLGTVNPIKEMAKIAHDNGAVIVVDGAQSTPHMKIDVQDLDCDFFALSSHKMCGPTGVGVLYGKKALLENMEPAEFGGEMIDFVGLYESTWKELPWKFEAGTPIIAGAIGLGAAIDFLEEIGLDEISRHEHKLAAYALERFRQLDGVTVYGPEERAGLVTFNLDDVHPHDVATVLDAEGIAVRAGHHCAQPLMKWLDVTATARASFYLYNTEEEIDKLVEALQKTKEYFTNVF</sequence>
<dbReference type="EC" id="2.8.1.7" evidence="7"/>
<dbReference type="EMBL" id="AL009126">
    <property type="protein sequence ID" value="CAB15258.1"/>
    <property type="molecule type" value="Genomic_DNA"/>
</dbReference>
<dbReference type="PIR" id="F70019">
    <property type="entry name" value="F70019"/>
</dbReference>
<dbReference type="RefSeq" id="NP_391148.1">
    <property type="nucleotide sequence ID" value="NC_000964.3"/>
</dbReference>
<dbReference type="RefSeq" id="WP_003228604.1">
    <property type="nucleotide sequence ID" value="NZ_OZ025638.1"/>
</dbReference>
<dbReference type="PDB" id="5J8Q">
    <property type="method" value="X-ray"/>
    <property type="resolution" value="1.70 A"/>
    <property type="chains" value="A=1-406"/>
</dbReference>
<dbReference type="PDB" id="5XT5">
    <property type="method" value="X-ray"/>
    <property type="resolution" value="2.34 A"/>
    <property type="chains" value="A/B=1-406"/>
</dbReference>
<dbReference type="PDB" id="5XT6">
    <property type="method" value="X-ray"/>
    <property type="resolution" value="3.50 A"/>
    <property type="chains" value="A/B=1-406"/>
</dbReference>
<dbReference type="PDB" id="5ZS9">
    <property type="method" value="X-ray"/>
    <property type="resolution" value="2.80 A"/>
    <property type="chains" value="A=1-406"/>
</dbReference>
<dbReference type="PDB" id="5ZSK">
    <property type="method" value="X-ray"/>
    <property type="resolution" value="3.24 A"/>
    <property type="chains" value="A=1-406"/>
</dbReference>
<dbReference type="PDB" id="5ZSO">
    <property type="method" value="X-ray"/>
    <property type="resolution" value="2.70 A"/>
    <property type="chains" value="A=1-406"/>
</dbReference>
<dbReference type="PDB" id="6KFY">
    <property type="method" value="X-ray"/>
    <property type="resolution" value="1.97 A"/>
    <property type="chains" value="A=1-406"/>
</dbReference>
<dbReference type="PDB" id="6KFZ">
    <property type="method" value="X-ray"/>
    <property type="resolution" value="1.96 A"/>
    <property type="chains" value="A=1-406"/>
</dbReference>
<dbReference type="PDB" id="7CEO">
    <property type="method" value="X-ray"/>
    <property type="resolution" value="2.43 A"/>
    <property type="chains" value="A=1-406"/>
</dbReference>
<dbReference type="PDB" id="7CEP">
    <property type="method" value="X-ray"/>
    <property type="resolution" value="2.05 A"/>
    <property type="chains" value="A=1-406"/>
</dbReference>
<dbReference type="PDB" id="7CEQ">
    <property type="method" value="X-ray"/>
    <property type="resolution" value="2.00 A"/>
    <property type="chains" value="A=1-406"/>
</dbReference>
<dbReference type="PDB" id="7CER">
    <property type="method" value="X-ray"/>
    <property type="resolution" value="2.30 A"/>
    <property type="chains" value="A=1-406"/>
</dbReference>
<dbReference type="PDB" id="7CES">
    <property type="method" value="X-ray"/>
    <property type="resolution" value="2.20 A"/>
    <property type="chains" value="A=1-406"/>
</dbReference>
<dbReference type="PDB" id="7E6A">
    <property type="method" value="X-ray"/>
    <property type="resolution" value="1.96 A"/>
    <property type="chains" value="A=1-406"/>
</dbReference>
<dbReference type="PDB" id="7E6B">
    <property type="method" value="X-ray"/>
    <property type="resolution" value="1.84 A"/>
    <property type="chains" value="A=1-406"/>
</dbReference>
<dbReference type="PDB" id="7E6C">
    <property type="method" value="X-ray"/>
    <property type="resolution" value="1.73 A"/>
    <property type="chains" value="A=1-406"/>
</dbReference>
<dbReference type="PDB" id="7E6D">
    <property type="method" value="X-ray"/>
    <property type="resolution" value="2.67 A"/>
    <property type="chains" value="A=1-406"/>
</dbReference>
<dbReference type="PDB" id="7E6E">
    <property type="method" value="X-ray"/>
    <property type="resolution" value="2.28 A"/>
    <property type="chains" value="A=1-406"/>
</dbReference>
<dbReference type="PDB" id="7E6F">
    <property type="method" value="X-ray"/>
    <property type="resolution" value="2.74 A"/>
    <property type="chains" value="A=1-406"/>
</dbReference>
<dbReference type="PDB" id="7XEJ">
    <property type="method" value="X-ray"/>
    <property type="resolution" value="1.74 A"/>
    <property type="chains" value="A=1-406"/>
</dbReference>
<dbReference type="PDB" id="7XEK">
    <property type="method" value="X-ray"/>
    <property type="resolution" value="1.88 A"/>
    <property type="chains" value="A=1-406"/>
</dbReference>
<dbReference type="PDB" id="7XEL">
    <property type="method" value="X-ray"/>
    <property type="resolution" value="1.80 A"/>
    <property type="chains" value="A=1-406"/>
</dbReference>
<dbReference type="PDB" id="7XEN">
    <property type="method" value="X-ray"/>
    <property type="resolution" value="2.47 A"/>
    <property type="chains" value="A=1-406"/>
</dbReference>
<dbReference type="PDB" id="7XEP">
    <property type="method" value="X-ray"/>
    <property type="resolution" value="1.78 A"/>
    <property type="chains" value="A=1-406"/>
</dbReference>
<dbReference type="PDB" id="7XET">
    <property type="method" value="X-ray"/>
    <property type="resolution" value="2.30 A"/>
    <property type="chains" value="A=1-406"/>
</dbReference>
<dbReference type="PDB" id="7YB3">
    <property type="method" value="X-ray"/>
    <property type="resolution" value="1.80 A"/>
    <property type="chains" value="A=1-406"/>
</dbReference>
<dbReference type="PDBsum" id="5J8Q"/>
<dbReference type="PDBsum" id="5XT5"/>
<dbReference type="PDBsum" id="5XT6"/>
<dbReference type="PDBsum" id="5ZS9"/>
<dbReference type="PDBsum" id="5ZSK"/>
<dbReference type="PDBsum" id="5ZSO"/>
<dbReference type="PDBsum" id="6KFY"/>
<dbReference type="PDBsum" id="6KFZ"/>
<dbReference type="PDBsum" id="7CEO"/>
<dbReference type="PDBsum" id="7CEP"/>
<dbReference type="PDBsum" id="7CEQ"/>
<dbReference type="PDBsum" id="7CER"/>
<dbReference type="PDBsum" id="7CES"/>
<dbReference type="PDBsum" id="7E6A"/>
<dbReference type="PDBsum" id="7E6B"/>
<dbReference type="PDBsum" id="7E6C"/>
<dbReference type="PDBsum" id="7E6D"/>
<dbReference type="PDBsum" id="7E6E"/>
<dbReference type="PDBsum" id="7E6F"/>
<dbReference type="PDBsum" id="7XEJ"/>
<dbReference type="PDBsum" id="7XEK"/>
<dbReference type="PDBsum" id="7XEL"/>
<dbReference type="PDBsum" id="7XEN"/>
<dbReference type="PDBsum" id="7XEP"/>
<dbReference type="PDBsum" id="7XET"/>
<dbReference type="PDBsum" id="7YB3"/>
<dbReference type="SMR" id="O32164"/>
<dbReference type="FunCoup" id="O32164">
    <property type="interactions" value="569"/>
</dbReference>
<dbReference type="IntAct" id="O32164">
    <property type="interactions" value="2"/>
</dbReference>
<dbReference type="MINT" id="O32164"/>
<dbReference type="STRING" id="224308.BSU32690"/>
<dbReference type="jPOST" id="O32164"/>
<dbReference type="PaxDb" id="224308-BSU32690"/>
<dbReference type="EnsemblBacteria" id="CAB15258">
    <property type="protein sequence ID" value="CAB15258"/>
    <property type="gene ID" value="BSU_32690"/>
</dbReference>
<dbReference type="GeneID" id="937108"/>
<dbReference type="KEGG" id="bsu:BSU32690"/>
<dbReference type="PATRIC" id="fig|224308.179.peg.3540"/>
<dbReference type="eggNOG" id="COG0520">
    <property type="taxonomic scope" value="Bacteria"/>
</dbReference>
<dbReference type="InParanoid" id="O32164"/>
<dbReference type="OrthoDB" id="9804366at2"/>
<dbReference type="PhylomeDB" id="O32164"/>
<dbReference type="BioCyc" id="BSUB:BSU32690-MONOMER"/>
<dbReference type="BRENDA" id="2.8.1.7">
    <property type="organism ID" value="658"/>
</dbReference>
<dbReference type="Proteomes" id="UP000001570">
    <property type="component" value="Chromosome"/>
</dbReference>
<dbReference type="GO" id="GO:0031071">
    <property type="term" value="F:cysteine desulfurase activity"/>
    <property type="evidence" value="ECO:0007669"/>
    <property type="project" value="UniProtKB-EC"/>
</dbReference>
<dbReference type="GO" id="GO:0030170">
    <property type="term" value="F:pyridoxal phosphate binding"/>
    <property type="evidence" value="ECO:0007669"/>
    <property type="project" value="InterPro"/>
</dbReference>
<dbReference type="GO" id="GO:0006534">
    <property type="term" value="P:cysteine metabolic process"/>
    <property type="evidence" value="ECO:0007669"/>
    <property type="project" value="InterPro"/>
</dbReference>
<dbReference type="CDD" id="cd06453">
    <property type="entry name" value="SufS_like"/>
    <property type="match status" value="1"/>
</dbReference>
<dbReference type="Gene3D" id="3.90.1150.10">
    <property type="entry name" value="Aspartate Aminotransferase, domain 1"/>
    <property type="match status" value="1"/>
</dbReference>
<dbReference type="Gene3D" id="3.40.640.10">
    <property type="entry name" value="Type I PLP-dependent aspartate aminotransferase-like (Major domain)"/>
    <property type="match status" value="1"/>
</dbReference>
<dbReference type="InterPro" id="IPR000192">
    <property type="entry name" value="Aminotrans_V_dom"/>
</dbReference>
<dbReference type="InterPro" id="IPR020578">
    <property type="entry name" value="Aminotrans_V_PyrdxlP_BS"/>
</dbReference>
<dbReference type="InterPro" id="IPR010970">
    <property type="entry name" value="Cys_dSase_SufS"/>
</dbReference>
<dbReference type="InterPro" id="IPR016454">
    <property type="entry name" value="Cysteine_dSase"/>
</dbReference>
<dbReference type="InterPro" id="IPR015424">
    <property type="entry name" value="PyrdxlP-dep_Trfase"/>
</dbReference>
<dbReference type="InterPro" id="IPR015421">
    <property type="entry name" value="PyrdxlP-dep_Trfase_major"/>
</dbReference>
<dbReference type="InterPro" id="IPR015422">
    <property type="entry name" value="PyrdxlP-dep_Trfase_small"/>
</dbReference>
<dbReference type="NCBIfam" id="TIGR01979">
    <property type="entry name" value="sufS"/>
    <property type="match status" value="1"/>
</dbReference>
<dbReference type="PANTHER" id="PTHR43586">
    <property type="entry name" value="CYSTEINE DESULFURASE"/>
    <property type="match status" value="1"/>
</dbReference>
<dbReference type="PANTHER" id="PTHR43586:SF8">
    <property type="entry name" value="CYSTEINE DESULFURASE 1, CHLOROPLASTIC"/>
    <property type="match status" value="1"/>
</dbReference>
<dbReference type="Pfam" id="PF00266">
    <property type="entry name" value="Aminotran_5"/>
    <property type="match status" value="1"/>
</dbReference>
<dbReference type="PIRSF" id="PIRSF005572">
    <property type="entry name" value="NifS"/>
    <property type="match status" value="1"/>
</dbReference>
<dbReference type="SUPFAM" id="SSF53383">
    <property type="entry name" value="PLP-dependent transferases"/>
    <property type="match status" value="1"/>
</dbReference>
<dbReference type="PROSITE" id="PS00595">
    <property type="entry name" value="AA_TRANSFER_CLASS_5"/>
    <property type="match status" value="1"/>
</dbReference>
<reference key="1">
    <citation type="journal article" date="1997" name="Nature">
        <title>The complete genome sequence of the Gram-positive bacterium Bacillus subtilis.</title>
        <authorList>
            <person name="Kunst F."/>
            <person name="Ogasawara N."/>
            <person name="Moszer I."/>
            <person name="Albertini A.M."/>
            <person name="Alloni G."/>
            <person name="Azevedo V."/>
            <person name="Bertero M.G."/>
            <person name="Bessieres P."/>
            <person name="Bolotin A."/>
            <person name="Borchert S."/>
            <person name="Borriss R."/>
            <person name="Boursier L."/>
            <person name="Brans A."/>
            <person name="Braun M."/>
            <person name="Brignell S.C."/>
            <person name="Bron S."/>
            <person name="Brouillet S."/>
            <person name="Bruschi C.V."/>
            <person name="Caldwell B."/>
            <person name="Capuano V."/>
            <person name="Carter N.M."/>
            <person name="Choi S.-K."/>
            <person name="Codani J.-J."/>
            <person name="Connerton I.F."/>
            <person name="Cummings N.J."/>
            <person name="Daniel R.A."/>
            <person name="Denizot F."/>
            <person name="Devine K.M."/>
            <person name="Duesterhoeft A."/>
            <person name="Ehrlich S.D."/>
            <person name="Emmerson P.T."/>
            <person name="Entian K.-D."/>
            <person name="Errington J."/>
            <person name="Fabret C."/>
            <person name="Ferrari E."/>
            <person name="Foulger D."/>
            <person name="Fritz C."/>
            <person name="Fujita M."/>
            <person name="Fujita Y."/>
            <person name="Fuma S."/>
            <person name="Galizzi A."/>
            <person name="Galleron N."/>
            <person name="Ghim S.-Y."/>
            <person name="Glaser P."/>
            <person name="Goffeau A."/>
            <person name="Golightly E.J."/>
            <person name="Grandi G."/>
            <person name="Guiseppi G."/>
            <person name="Guy B.J."/>
            <person name="Haga K."/>
            <person name="Haiech J."/>
            <person name="Harwood C.R."/>
            <person name="Henaut A."/>
            <person name="Hilbert H."/>
            <person name="Holsappel S."/>
            <person name="Hosono S."/>
            <person name="Hullo M.-F."/>
            <person name="Itaya M."/>
            <person name="Jones L.-M."/>
            <person name="Joris B."/>
            <person name="Karamata D."/>
            <person name="Kasahara Y."/>
            <person name="Klaerr-Blanchard M."/>
            <person name="Klein C."/>
            <person name="Kobayashi Y."/>
            <person name="Koetter P."/>
            <person name="Koningstein G."/>
            <person name="Krogh S."/>
            <person name="Kumano M."/>
            <person name="Kurita K."/>
            <person name="Lapidus A."/>
            <person name="Lardinois S."/>
            <person name="Lauber J."/>
            <person name="Lazarevic V."/>
            <person name="Lee S.-M."/>
            <person name="Levine A."/>
            <person name="Liu H."/>
            <person name="Masuda S."/>
            <person name="Mauel C."/>
            <person name="Medigue C."/>
            <person name="Medina N."/>
            <person name="Mellado R.P."/>
            <person name="Mizuno M."/>
            <person name="Moestl D."/>
            <person name="Nakai S."/>
            <person name="Noback M."/>
            <person name="Noone D."/>
            <person name="O'Reilly M."/>
            <person name="Ogawa K."/>
            <person name="Ogiwara A."/>
            <person name="Oudega B."/>
            <person name="Park S.-H."/>
            <person name="Parro V."/>
            <person name="Pohl T.M."/>
            <person name="Portetelle D."/>
            <person name="Porwollik S."/>
            <person name="Prescott A.M."/>
            <person name="Presecan E."/>
            <person name="Pujic P."/>
            <person name="Purnelle B."/>
            <person name="Rapoport G."/>
            <person name="Rey M."/>
            <person name="Reynolds S."/>
            <person name="Rieger M."/>
            <person name="Rivolta C."/>
            <person name="Rocha E."/>
            <person name="Roche B."/>
            <person name="Rose M."/>
            <person name="Sadaie Y."/>
            <person name="Sato T."/>
            <person name="Scanlan E."/>
            <person name="Schleich S."/>
            <person name="Schroeter R."/>
            <person name="Scoffone F."/>
            <person name="Sekiguchi J."/>
            <person name="Sekowska A."/>
            <person name="Seror S.J."/>
            <person name="Serror P."/>
            <person name="Shin B.-S."/>
            <person name="Soldo B."/>
            <person name="Sorokin A."/>
            <person name="Tacconi E."/>
            <person name="Takagi T."/>
            <person name="Takahashi H."/>
            <person name="Takemaru K."/>
            <person name="Takeuchi M."/>
            <person name="Tamakoshi A."/>
            <person name="Tanaka T."/>
            <person name="Terpstra P."/>
            <person name="Tognoni A."/>
            <person name="Tosato V."/>
            <person name="Uchiyama S."/>
            <person name="Vandenbol M."/>
            <person name="Vannier F."/>
            <person name="Vassarotti A."/>
            <person name="Viari A."/>
            <person name="Wambutt R."/>
            <person name="Wedler E."/>
            <person name="Wedler H."/>
            <person name="Weitzenegger T."/>
            <person name="Winters P."/>
            <person name="Wipat A."/>
            <person name="Yamamoto H."/>
            <person name="Yamane K."/>
            <person name="Yasumoto K."/>
            <person name="Yata K."/>
            <person name="Yoshida K."/>
            <person name="Yoshikawa H.-F."/>
            <person name="Zumstein E."/>
            <person name="Yoshikawa H."/>
            <person name="Danchin A."/>
        </authorList>
    </citation>
    <scope>NUCLEOTIDE SEQUENCE [LARGE SCALE GENOMIC DNA]</scope>
    <source>
        <strain>168</strain>
    </source>
</reference>
<reference key="2">
    <citation type="journal article" date="2010" name="Biochemistry">
        <title>Kinetic analysis of the bisubstrate cysteine desulfurase SufS from Bacillus subtilis.</title>
        <authorList>
            <person name="Selbach B."/>
            <person name="Earles E."/>
            <person name="Dos Santos P.C."/>
        </authorList>
    </citation>
    <scope>FUNCTION</scope>
    <scope>REACTION MECHANISM</scope>
    <scope>CATALYTIC ACTIVITY</scope>
    <scope>BIOPHYSICOCHEMICAL PROPERTIES</scope>
    <scope>SUBUNIT</scope>
    <scope>MUTAGENESIS OF CYS-361</scope>
    <source>
        <strain>168 / PS832</strain>
    </source>
</reference>
<reference key="3">
    <citation type="journal article" date="2010" name="J. Bacteriol.">
        <title>SufU is an essential iron-sulfur cluster scaffold protein in Bacillus subtilis.</title>
        <authorList>
            <person name="Albrecht A.G."/>
            <person name="Netz D.J."/>
            <person name="Miethke M."/>
            <person name="Pierik A.J."/>
            <person name="Burghaus O."/>
            <person name="Peuckert F."/>
            <person name="Lill R."/>
            <person name="Marahiel M.A."/>
        </authorList>
    </citation>
    <scope>FUNCTION</scope>
    <source>
        <strain>168</strain>
    </source>
</reference>
<reference key="4">
    <citation type="journal article" date="2011" name="ChemBioChem">
        <title>The frataxin homologue Fra plays a key role in intracellular iron channeling in Bacillus subtilis.</title>
        <authorList>
            <person name="Albrecht A.G."/>
            <person name="Landmann H."/>
            <person name="Nette D."/>
            <person name="Burghaus O."/>
            <person name="Peuckert F."/>
            <person name="Seubert A."/>
            <person name="Miethke M."/>
            <person name="Marahiel M.A."/>
        </authorList>
    </citation>
    <scope>FUNCTION</scope>
    <source>
        <strain>ATCC 21332 / IAM 1213</strain>
    </source>
</reference>
<reference key="5">
    <citation type="journal article" date="2011" name="FEBS Lett.">
        <title>Mechanistic characterization of sulfur transfer from cysteine desulfurase SufS to the iron-sulfur scaffold SufU in Bacillus subtilis.</title>
        <authorList>
            <person name="Albrecht A.G."/>
            <person name="Peuckert F."/>
            <person name="Landmann H."/>
            <person name="Miethke M."/>
            <person name="Seubert A."/>
            <person name="Marahiel M.A."/>
        </authorList>
    </citation>
    <scope>ACTIVITY REGULATION</scope>
    <scope>BIOPHYSICOCHEMICAL PROPERTIES</scope>
    <scope>INTERACTION WITH SUFU</scope>
    <scope>SUBUNIT</scope>
    <source>
        <strain>168</strain>
    </source>
</reference>
<reference key="6">
    <citation type="journal article" date="2014" name="Biochemistry">
        <title>Fe-S cluster biogenesis in Gram-positive bacteria: SufU is a zinc-dependent sulfur transfer protein.</title>
        <authorList>
            <person name="Selbach B.P."/>
            <person name="Chung A.H."/>
            <person name="Scott A.D."/>
            <person name="George S.J."/>
            <person name="Cramer S.P."/>
            <person name="Dos Santos P.C."/>
        </authorList>
    </citation>
    <scope>REACTION MECHANISM</scope>
    <scope>ACTIVITY REGULATION</scope>
    <source>
        <strain>168 / PS832</strain>
    </source>
</reference>
<reference evidence="11" key="7">
    <citation type="journal article" date="2016" name="PLoS ONE">
        <title>Crystal Structure of Bacillus subtilis Cysteine Desulfurase SufS and Its Dynamic Interaction with Frataxin and Scaffold Protein SufU.</title>
        <authorList>
            <person name="Blauenburg B."/>
            <person name="Mielcarek A."/>
            <person name="Altegoer F."/>
            <person name="Fage C.D."/>
            <person name="Linne U."/>
            <person name="Bange G."/>
            <person name="Marahiel M.A."/>
        </authorList>
    </citation>
    <scope>X-RAY CRYSTALLOGRAPHY (1.70 ANGSTROMS)</scope>
    <scope>SUBUNIT</scope>
    <scope>INTERACTION WITH SUFU AND FRA</scope>
    <scope>ACTIVE SITE</scope>
    <scope>CATALYTIC ACTIVITY</scope>
    <source>
        <strain>168</strain>
    </source>
</reference>
<reference evidence="12 13" key="8">
    <citation type="journal article" date="2017" name="J. Am. Chem. Soc.">
        <title>Zinc-Ligand Swapping Mediated Complex Formation and Sulfur Transfer between SufS and SufU for Iron-Sulfur Cluster Biogenesis in Bacillus subtilis.</title>
        <authorList>
            <person name="Fujishiro T."/>
            <person name="Terahata T."/>
            <person name="Kunichika K."/>
            <person name="Yokoyama N."/>
            <person name="Maruyama C."/>
            <person name="Asai K."/>
            <person name="Takahashi Y."/>
        </authorList>
    </citation>
    <scope>X-RAY CRYSTALLOGRAPHY (2.34 ANGSTROMS)</scope>
    <scope>FUNCTION</scope>
    <scope>INTERACTION WITH SUFU</scope>
    <source>
        <strain>168</strain>
    </source>
</reference>
<reference evidence="14 15 16 17" key="9">
    <citation type="journal article" date="2020" name="FEBS J.">
        <title>Snapshots of PLP-substrate and PLP-product external aldimines as intermediates in two types of cysteine desulfurase enzymes.</title>
        <authorList>
            <person name="Nakamura R."/>
            <person name="Hikita M."/>
            <person name="Ogawa S."/>
            <person name="Takahashi Y."/>
            <person name="Fujishiro T."/>
        </authorList>
    </citation>
    <scope>X-RAY CRYSTALLOGRAPHY (1.96 ANGSTROMS)</scope>
    <scope>FUNCTION</scope>
    <scope>ACTIVE SITE</scope>
</reference>